<feature type="chain" id="PRO_1000018397" description="Tryptophan synthase beta chain">
    <location>
        <begin position="1"/>
        <end position="397"/>
    </location>
</feature>
<feature type="modified residue" description="N6-(pyridoxal phosphate)lysine" evidence="1">
    <location>
        <position position="87"/>
    </location>
</feature>
<dbReference type="EC" id="4.2.1.20" evidence="1"/>
<dbReference type="EMBL" id="CP000034">
    <property type="protein sequence ID" value="ABB61476.1"/>
    <property type="molecule type" value="Genomic_DNA"/>
</dbReference>
<dbReference type="RefSeq" id="WP_000209513.1">
    <property type="nucleotide sequence ID" value="NC_007606.1"/>
</dbReference>
<dbReference type="RefSeq" id="YP_402967.1">
    <property type="nucleotide sequence ID" value="NC_007606.1"/>
</dbReference>
<dbReference type="SMR" id="Q32GS9"/>
<dbReference type="STRING" id="300267.SDY_1329"/>
<dbReference type="EnsemblBacteria" id="ABB61476">
    <property type="protein sequence ID" value="ABB61476"/>
    <property type="gene ID" value="SDY_1329"/>
</dbReference>
<dbReference type="GeneID" id="75171375"/>
<dbReference type="KEGG" id="sdy:SDY_1329"/>
<dbReference type="PATRIC" id="fig|300267.13.peg.1579"/>
<dbReference type="HOGENOM" id="CLU_016734_3_1_6"/>
<dbReference type="UniPathway" id="UPA00035">
    <property type="reaction ID" value="UER00044"/>
</dbReference>
<dbReference type="Proteomes" id="UP000002716">
    <property type="component" value="Chromosome"/>
</dbReference>
<dbReference type="GO" id="GO:0005737">
    <property type="term" value="C:cytoplasm"/>
    <property type="evidence" value="ECO:0007669"/>
    <property type="project" value="TreeGrafter"/>
</dbReference>
<dbReference type="GO" id="GO:0004834">
    <property type="term" value="F:tryptophan synthase activity"/>
    <property type="evidence" value="ECO:0007669"/>
    <property type="project" value="UniProtKB-UniRule"/>
</dbReference>
<dbReference type="CDD" id="cd06446">
    <property type="entry name" value="Trp-synth_B"/>
    <property type="match status" value="1"/>
</dbReference>
<dbReference type="FunFam" id="3.40.50.1100:FF:000001">
    <property type="entry name" value="Tryptophan synthase beta chain"/>
    <property type="match status" value="1"/>
</dbReference>
<dbReference type="FunFam" id="3.40.50.1100:FF:000004">
    <property type="entry name" value="Tryptophan synthase beta chain"/>
    <property type="match status" value="1"/>
</dbReference>
<dbReference type="Gene3D" id="3.40.50.1100">
    <property type="match status" value="2"/>
</dbReference>
<dbReference type="HAMAP" id="MF_00133">
    <property type="entry name" value="Trp_synth_beta"/>
    <property type="match status" value="1"/>
</dbReference>
<dbReference type="InterPro" id="IPR006653">
    <property type="entry name" value="Trp_synth_b_CS"/>
</dbReference>
<dbReference type="InterPro" id="IPR006654">
    <property type="entry name" value="Trp_synth_beta"/>
</dbReference>
<dbReference type="InterPro" id="IPR023026">
    <property type="entry name" value="Trp_synth_beta/beta-like"/>
</dbReference>
<dbReference type="InterPro" id="IPR001926">
    <property type="entry name" value="TrpB-like_PALP"/>
</dbReference>
<dbReference type="InterPro" id="IPR036052">
    <property type="entry name" value="TrpB-like_PALP_sf"/>
</dbReference>
<dbReference type="NCBIfam" id="TIGR00263">
    <property type="entry name" value="trpB"/>
    <property type="match status" value="1"/>
</dbReference>
<dbReference type="PANTHER" id="PTHR48077:SF3">
    <property type="entry name" value="TRYPTOPHAN SYNTHASE"/>
    <property type="match status" value="1"/>
</dbReference>
<dbReference type="PANTHER" id="PTHR48077">
    <property type="entry name" value="TRYPTOPHAN SYNTHASE-RELATED"/>
    <property type="match status" value="1"/>
</dbReference>
<dbReference type="Pfam" id="PF00291">
    <property type="entry name" value="PALP"/>
    <property type="match status" value="1"/>
</dbReference>
<dbReference type="PIRSF" id="PIRSF001413">
    <property type="entry name" value="Trp_syn_beta"/>
    <property type="match status" value="1"/>
</dbReference>
<dbReference type="SUPFAM" id="SSF53686">
    <property type="entry name" value="Tryptophan synthase beta subunit-like PLP-dependent enzymes"/>
    <property type="match status" value="1"/>
</dbReference>
<dbReference type="PROSITE" id="PS00168">
    <property type="entry name" value="TRP_SYNTHASE_BETA"/>
    <property type="match status" value="1"/>
</dbReference>
<organism>
    <name type="scientific">Shigella dysenteriae serotype 1 (strain Sd197)</name>
    <dbReference type="NCBI Taxonomy" id="300267"/>
    <lineage>
        <taxon>Bacteria</taxon>
        <taxon>Pseudomonadati</taxon>
        <taxon>Pseudomonadota</taxon>
        <taxon>Gammaproteobacteria</taxon>
        <taxon>Enterobacterales</taxon>
        <taxon>Enterobacteriaceae</taxon>
        <taxon>Shigella</taxon>
    </lineage>
</organism>
<keyword id="KW-0028">Amino-acid biosynthesis</keyword>
<keyword id="KW-0057">Aromatic amino acid biosynthesis</keyword>
<keyword id="KW-0456">Lyase</keyword>
<keyword id="KW-0663">Pyridoxal phosphate</keyword>
<keyword id="KW-1185">Reference proteome</keyword>
<keyword id="KW-0822">Tryptophan biosynthesis</keyword>
<accession>Q32GS9</accession>
<evidence type="ECO:0000255" key="1">
    <source>
        <dbReference type="HAMAP-Rule" id="MF_00133"/>
    </source>
</evidence>
<reference key="1">
    <citation type="journal article" date="2005" name="Nucleic Acids Res.">
        <title>Genome dynamics and diversity of Shigella species, the etiologic agents of bacillary dysentery.</title>
        <authorList>
            <person name="Yang F."/>
            <person name="Yang J."/>
            <person name="Zhang X."/>
            <person name="Chen L."/>
            <person name="Jiang Y."/>
            <person name="Yan Y."/>
            <person name="Tang X."/>
            <person name="Wang J."/>
            <person name="Xiong Z."/>
            <person name="Dong J."/>
            <person name="Xue Y."/>
            <person name="Zhu Y."/>
            <person name="Xu X."/>
            <person name="Sun L."/>
            <person name="Chen S."/>
            <person name="Nie H."/>
            <person name="Peng J."/>
            <person name="Xu J."/>
            <person name="Wang Y."/>
            <person name="Yuan Z."/>
            <person name="Wen Y."/>
            <person name="Yao Z."/>
            <person name="Shen Y."/>
            <person name="Qiang B."/>
            <person name="Hou Y."/>
            <person name="Yu J."/>
            <person name="Jin Q."/>
        </authorList>
    </citation>
    <scope>NUCLEOTIDE SEQUENCE [LARGE SCALE GENOMIC DNA]</scope>
    <source>
        <strain>Sd197</strain>
    </source>
</reference>
<comment type="function">
    <text evidence="1">The beta subunit is responsible for the synthesis of L-tryptophan from indole and L-serine.</text>
</comment>
<comment type="catalytic activity">
    <reaction evidence="1">
        <text>(1S,2R)-1-C-(indol-3-yl)glycerol 3-phosphate + L-serine = D-glyceraldehyde 3-phosphate + L-tryptophan + H2O</text>
        <dbReference type="Rhea" id="RHEA:10532"/>
        <dbReference type="ChEBI" id="CHEBI:15377"/>
        <dbReference type="ChEBI" id="CHEBI:33384"/>
        <dbReference type="ChEBI" id="CHEBI:57912"/>
        <dbReference type="ChEBI" id="CHEBI:58866"/>
        <dbReference type="ChEBI" id="CHEBI:59776"/>
        <dbReference type="EC" id="4.2.1.20"/>
    </reaction>
</comment>
<comment type="cofactor">
    <cofactor evidence="1">
        <name>pyridoxal 5'-phosphate</name>
        <dbReference type="ChEBI" id="CHEBI:597326"/>
    </cofactor>
</comment>
<comment type="pathway">
    <text evidence="1">Amino-acid biosynthesis; L-tryptophan biosynthesis; L-tryptophan from chorismate: step 5/5.</text>
</comment>
<comment type="subunit">
    <text evidence="1">Tetramer of two alpha and two beta chains.</text>
</comment>
<comment type="similarity">
    <text evidence="1">Belongs to the TrpB family.</text>
</comment>
<name>TRPB_SHIDS</name>
<sequence length="397" mass="42998">MTTLLNPYFGEFGGMYVPQILMPALRQLEEAFVSAQKDPEFQAQFNDLLKNYAGRPTALTKCQNITAGTNTTLYLKREDLLHGGAHKTNQVLGQALLAKRMGKTEIIAETGAGQHGVASALASALLGLKCRIYMGAKDVERQSPNVFRMRLMGAEVIPVHSGSATLKDACNEALRDWSGSYETAHYMLGTAAGPHPYPTIVREFQRMIGEETKAQILEREGRLPDAVIACVGGGSNAIGMFADFINETDVGLIGVEPGGHGIETGEHGAPLKHGRVGIYFGMKAPMMQTEDGQIEESYSISAGLDFPSVGPQHAYLNSTGRADYVSITDDEALEAFKTLCLHEGIIPALESSHALAHALKMMRENPEKEQLLVVNLSGRGDKDIFTVHDILKARGEI</sequence>
<proteinExistence type="inferred from homology"/>
<gene>
    <name evidence="1" type="primary">trpB</name>
    <name type="ordered locus">SDY_1329</name>
</gene>
<protein>
    <recommendedName>
        <fullName evidence="1">Tryptophan synthase beta chain</fullName>
        <ecNumber evidence="1">4.2.1.20</ecNumber>
    </recommendedName>
</protein>